<feature type="signal peptide" evidence="1">
    <location>
        <begin position="1"/>
        <end position="16"/>
    </location>
</feature>
<feature type="chain" id="PRO_0000041748" description="Major allergen Asp f 2">
    <location>
        <begin position="17"/>
        <end position="310"/>
    </location>
</feature>
<feature type="region of interest" description="Disordered" evidence="2">
    <location>
        <begin position="247"/>
        <end position="310"/>
    </location>
</feature>
<feature type="compositionally biased region" description="Low complexity" evidence="2">
    <location>
        <begin position="258"/>
        <end position="292"/>
    </location>
</feature>
<feature type="compositionally biased region" description="Basic and acidic residues" evidence="2">
    <location>
        <begin position="300"/>
        <end position="310"/>
    </location>
</feature>
<feature type="glycosylation site" description="N-linked (GlcNAc...) asparagine" evidence="1">
    <location>
        <position position="57"/>
    </location>
</feature>
<feature type="glycosylation site" description="N-linked (GlcNAc...) asparagine" evidence="1">
    <location>
        <position position="87"/>
    </location>
</feature>
<feature type="glycosylation site" description="N-linked (GlcNAc...) asparagine" evidence="1">
    <location>
        <position position="143"/>
    </location>
</feature>
<feature type="glycosylation site" description="N-linked (GlcNAc...) asparagine" evidence="1">
    <location>
        <position position="216"/>
    </location>
</feature>
<feature type="sequence conflict" description="In Ref. 3; AAB07620." evidence="3" ref="3">
    <original>RRQI</original>
    <variation>SARD</variation>
    <location>
        <begin position="61"/>
        <end position="64"/>
    </location>
</feature>
<feature type="sequence conflict" description="In Ref. 1; AAC69357 and 3; AAB07620." evidence="3" ref="1 3">
    <original>LQ</original>
    <variation>FE</variation>
    <location>
        <begin position="227"/>
        <end position="228"/>
    </location>
</feature>
<proteinExistence type="evidence at protein level"/>
<gene>
    <name type="ORF">AFUA_4G09580</name>
</gene>
<comment type="subcellular location">
    <subcellularLocation>
        <location>Secreted</location>
    </subcellularLocation>
    <text>Cell-associated.</text>
</comment>
<comment type="allergen">
    <text>Causes an allergic reaction in human. Associated with allergic bronchopulmonary aspergillosis.</text>
</comment>
<comment type="similarity">
    <text evidence="3">Belongs to the ZPS1 family.</text>
</comment>
<comment type="sequence caution" evidence="3">
    <conflict type="erroneous gene model prediction">
        <sequence resource="EMBL-CDS" id="EAL89830"/>
    </conflict>
</comment>
<evidence type="ECO:0000255" key="1"/>
<evidence type="ECO:0000256" key="2">
    <source>
        <dbReference type="SAM" id="MobiDB-lite"/>
    </source>
</evidence>
<evidence type="ECO:0000305" key="3"/>
<protein>
    <recommendedName>
        <fullName>Major allergen Asp f 2</fullName>
    </recommendedName>
    <alternativeName>
        <fullName>Allergen Asp f II</fullName>
    </alternativeName>
    <allergenName>Asp f 2</allergenName>
</protein>
<reference key="1">
    <citation type="journal article" date="1998" name="Infect. Immun.">
        <title>Immunological characterization of Asp f 2, a major allergen from Aspergillus fumigatus associated with allergic bronchopulmonary aspergillosis.</title>
        <authorList>
            <person name="Banerjee B."/>
            <person name="Greenberger P.A."/>
            <person name="Fink J.N."/>
            <person name="Kurup V.P."/>
        </authorList>
    </citation>
    <scope>NUCLEOTIDE SEQUENCE [GENOMIC DNA]</scope>
    <source>
        <strain>ATCC 42202 / AF-102 / Ag 507</strain>
    </source>
</reference>
<reference key="2">
    <citation type="journal article" date="2005" name="Nature">
        <title>Genomic sequence of the pathogenic and allergenic filamentous fungus Aspergillus fumigatus.</title>
        <authorList>
            <person name="Nierman W.C."/>
            <person name="Pain A."/>
            <person name="Anderson M.J."/>
            <person name="Wortman J.R."/>
            <person name="Kim H.S."/>
            <person name="Arroyo J."/>
            <person name="Berriman M."/>
            <person name="Abe K."/>
            <person name="Archer D.B."/>
            <person name="Bermejo C."/>
            <person name="Bennett J.W."/>
            <person name="Bowyer P."/>
            <person name="Chen D."/>
            <person name="Collins M."/>
            <person name="Coulsen R."/>
            <person name="Davies R."/>
            <person name="Dyer P.S."/>
            <person name="Farman M.L."/>
            <person name="Fedorova N."/>
            <person name="Fedorova N.D."/>
            <person name="Feldblyum T.V."/>
            <person name="Fischer R."/>
            <person name="Fosker N."/>
            <person name="Fraser A."/>
            <person name="Garcia J.L."/>
            <person name="Garcia M.J."/>
            <person name="Goble A."/>
            <person name="Goldman G.H."/>
            <person name="Gomi K."/>
            <person name="Griffith-Jones S."/>
            <person name="Gwilliam R."/>
            <person name="Haas B.J."/>
            <person name="Haas H."/>
            <person name="Harris D.E."/>
            <person name="Horiuchi H."/>
            <person name="Huang J."/>
            <person name="Humphray S."/>
            <person name="Jimenez J."/>
            <person name="Keller N."/>
            <person name="Khouri H."/>
            <person name="Kitamoto K."/>
            <person name="Kobayashi T."/>
            <person name="Konzack S."/>
            <person name="Kulkarni R."/>
            <person name="Kumagai T."/>
            <person name="Lafton A."/>
            <person name="Latge J.-P."/>
            <person name="Li W."/>
            <person name="Lord A."/>
            <person name="Lu C."/>
            <person name="Majoros W.H."/>
            <person name="May G.S."/>
            <person name="Miller B.L."/>
            <person name="Mohamoud Y."/>
            <person name="Molina M."/>
            <person name="Monod M."/>
            <person name="Mouyna I."/>
            <person name="Mulligan S."/>
            <person name="Murphy L.D."/>
            <person name="O'Neil S."/>
            <person name="Paulsen I."/>
            <person name="Penalva M.A."/>
            <person name="Pertea M."/>
            <person name="Price C."/>
            <person name="Pritchard B.L."/>
            <person name="Quail M.A."/>
            <person name="Rabbinowitsch E."/>
            <person name="Rawlins N."/>
            <person name="Rajandream M.A."/>
            <person name="Reichard U."/>
            <person name="Renauld H."/>
            <person name="Robson G.D."/>
            <person name="Rodriguez de Cordoba S."/>
            <person name="Rodriguez-Pena J.M."/>
            <person name="Ronning C.M."/>
            <person name="Rutter S."/>
            <person name="Salzberg S.L."/>
            <person name="Sanchez M."/>
            <person name="Sanchez-Ferrero J.C."/>
            <person name="Saunders D."/>
            <person name="Seeger K."/>
            <person name="Squares R."/>
            <person name="Squares S."/>
            <person name="Takeuchi M."/>
            <person name="Tekaia F."/>
            <person name="Turner G."/>
            <person name="Vazquez de Aldana C.R."/>
            <person name="Weidman J."/>
            <person name="White O."/>
            <person name="Woodward J.R."/>
            <person name="Yu J.-H."/>
            <person name="Fraser C.M."/>
            <person name="Galagan J.E."/>
            <person name="Asai K."/>
            <person name="Machida M."/>
            <person name="Hall N."/>
            <person name="Barrell B.G."/>
            <person name="Denning D.W."/>
        </authorList>
    </citation>
    <scope>NUCLEOTIDE SEQUENCE [LARGE SCALE GENOMIC DNA]</scope>
    <source>
        <strain>ATCC MYA-4609 / CBS 101355 / FGSC A1100 / Af293</strain>
    </source>
</reference>
<reference key="3">
    <citation type="journal article" date="1996" name="J. Lab. Clin. Med.">
        <title>Molecular cloning and expression of a recombinant Aspergillus fumigatus protein Asp f II with significant immunoglobulin E reactivity in allergic bronchopulmonary aspergillosis.</title>
        <authorList>
            <person name="Banerjee B."/>
            <person name="Kurup V.P."/>
            <person name="Phadnis S."/>
            <person name="Greenberger P.A."/>
            <person name="Fink J.N."/>
        </authorList>
    </citation>
    <scope>NUCLEOTIDE SEQUENCE [MRNA] OF 61-310</scope>
    <source>
        <strain>ATCC 42202 / AF-102 / Ag 507</strain>
    </source>
</reference>
<name>ALL2_ASPFU</name>
<keyword id="KW-0020">Allergen</keyword>
<keyword id="KW-0325">Glycoprotein</keyword>
<keyword id="KW-1185">Reference proteome</keyword>
<keyword id="KW-0964">Secreted</keyword>
<keyword id="KW-0732">Signal</keyword>
<sequence length="310" mass="32838">MAALLRLAVLLPLAAPLVATLPTSPVPIAARATPHEPVFFSWDAGAVTSFPIHSSCNATQRRQIEAGLNEAVELARHAKAHILRWGNESEIYRKYFGNRPTMEAVGAYDVIVNGDKANVLFRCDNPDGNCALEGWGGHWRGANATSETVICDRSYTTRRWLVSMCSQGYTVAGSETNTFWASDLMHRLYHVPAVGQGWVDHFADGYDEVIALAKSNGTESTHDSEALQYFALEAYAFDIAAPGVGCAGESHGPDQGHDTGSASAPASTSTSSSSSGSGSGATTTPTDSPSATIDVPSNCHTHEGGQLHCT</sequence>
<organism>
    <name type="scientific">Aspergillus fumigatus (strain ATCC MYA-4609 / CBS 101355 / FGSC A1100 / Af293)</name>
    <name type="common">Neosartorya fumigata</name>
    <dbReference type="NCBI Taxonomy" id="330879"/>
    <lineage>
        <taxon>Eukaryota</taxon>
        <taxon>Fungi</taxon>
        <taxon>Dikarya</taxon>
        <taxon>Ascomycota</taxon>
        <taxon>Pezizomycotina</taxon>
        <taxon>Eurotiomycetes</taxon>
        <taxon>Eurotiomycetidae</taxon>
        <taxon>Eurotiales</taxon>
        <taxon>Aspergillaceae</taxon>
        <taxon>Aspergillus</taxon>
        <taxon>Aspergillus subgen. Fumigati</taxon>
    </lineage>
</organism>
<accession>P79017</accession>
<accession>Q09015</accession>
<accession>Q4WPK4</accession>
<dbReference type="EMBL" id="U56938">
    <property type="protein sequence ID" value="AAC69357.1"/>
    <property type="molecule type" value="Genomic_DNA"/>
</dbReference>
<dbReference type="EMBL" id="AAHF01000005">
    <property type="protein sequence ID" value="EAL89830.1"/>
    <property type="status" value="ALT_SEQ"/>
    <property type="molecule type" value="Genomic_DNA"/>
</dbReference>
<dbReference type="EMBL" id="U20722">
    <property type="protein sequence ID" value="AAB07620.1"/>
    <property type="molecule type" value="mRNA"/>
</dbReference>
<dbReference type="RefSeq" id="XP_751868.1">
    <property type="nucleotide sequence ID" value="XM_746775.1"/>
</dbReference>
<dbReference type="FunCoup" id="P79017">
    <property type="interactions" value="17"/>
</dbReference>
<dbReference type="STRING" id="330879.P79017"/>
<dbReference type="Allergome" id="3115">
    <property type="allergen name" value="Asp f 2.0101"/>
</dbReference>
<dbReference type="Allergome" id="71">
    <property type="allergen name" value="Asp f 2"/>
</dbReference>
<dbReference type="GeneID" id="3509208"/>
<dbReference type="KEGG" id="afm:AFUA_4G09580"/>
<dbReference type="eggNOG" id="ENOG502RTN8">
    <property type="taxonomic scope" value="Eukaryota"/>
</dbReference>
<dbReference type="HOGENOM" id="CLU_048223_0_0_1"/>
<dbReference type="InParanoid" id="P79017"/>
<dbReference type="OrthoDB" id="4689212at2759"/>
<dbReference type="Proteomes" id="UP000002530">
    <property type="component" value="Chromosome 4"/>
</dbReference>
<dbReference type="GO" id="GO:0009986">
    <property type="term" value="C:cell surface"/>
    <property type="evidence" value="ECO:0000318"/>
    <property type="project" value="GO_Central"/>
</dbReference>
<dbReference type="GO" id="GO:0005576">
    <property type="term" value="C:extracellular region"/>
    <property type="evidence" value="ECO:0000318"/>
    <property type="project" value="GO_Central"/>
</dbReference>
<dbReference type="GO" id="GO:0009277">
    <property type="term" value="C:fungal-type cell wall"/>
    <property type="evidence" value="ECO:0000318"/>
    <property type="project" value="GO_Central"/>
</dbReference>
<dbReference type="GO" id="GO:0005178">
    <property type="term" value="F:integrin binding"/>
    <property type="evidence" value="ECO:0000318"/>
    <property type="project" value="GO_Central"/>
</dbReference>
<dbReference type="GO" id="GO:0008237">
    <property type="term" value="F:metallopeptidase activity"/>
    <property type="evidence" value="ECO:0007669"/>
    <property type="project" value="InterPro"/>
</dbReference>
<dbReference type="GO" id="GO:0008270">
    <property type="term" value="F:zinc ion binding"/>
    <property type="evidence" value="ECO:0000318"/>
    <property type="project" value="GO_Central"/>
</dbReference>
<dbReference type="CDD" id="cd11307">
    <property type="entry name" value="M35_Asp_f2_like"/>
    <property type="match status" value="1"/>
</dbReference>
<dbReference type="FunFam" id="3.40.390.10:FF:000043">
    <property type="entry name" value="Major allergen Asp F2"/>
    <property type="match status" value="1"/>
</dbReference>
<dbReference type="Gene3D" id="3.40.390.10">
    <property type="entry name" value="Collagenase (Catalytic Domain)"/>
    <property type="match status" value="1"/>
</dbReference>
<dbReference type="InterPro" id="IPR029482">
    <property type="entry name" value="HRXXH"/>
</dbReference>
<dbReference type="InterPro" id="IPR024079">
    <property type="entry name" value="MetalloPept_cat_dom_sf"/>
</dbReference>
<dbReference type="InterPro" id="IPR039124">
    <property type="entry name" value="PRA1-like"/>
</dbReference>
<dbReference type="PANTHER" id="PTHR39399">
    <property type="entry name" value="PROTEIN ZPS1"/>
    <property type="match status" value="1"/>
</dbReference>
<dbReference type="PANTHER" id="PTHR39399:SF1">
    <property type="entry name" value="PROTEIN ZPS1"/>
    <property type="match status" value="1"/>
</dbReference>
<dbReference type="Pfam" id="PF13933">
    <property type="entry name" value="HRXXH"/>
    <property type="match status" value="1"/>
</dbReference>
<dbReference type="SUPFAM" id="SSF55486">
    <property type="entry name" value="Metalloproteases ('zincins'), catalytic domain"/>
    <property type="match status" value="1"/>
</dbReference>